<comment type="subcellular location">
    <subcellularLocation>
        <location>Membrane</location>
        <topology>Single-pass type II membrane protein</topology>
    </subcellularLocation>
</comment>
<comment type="similarity">
    <text evidence="6">Belongs to the peptidase M1 family.</text>
</comment>
<comment type="caution">
    <text evidence="6">Although strongly related to the peptidase M1 family, it lacks the conserved active metal binding Glu and His in positions 496 and 499, which are replaced by a Arg and Ala residues respectively, suggesting that it has no activity.</text>
</comment>
<accession>Q17405</accession>
<keyword id="KW-0325">Glycoprotein</keyword>
<keyword id="KW-0472">Membrane</keyword>
<keyword id="KW-1185">Reference proteome</keyword>
<keyword id="KW-0735">Signal-anchor</keyword>
<keyword id="KW-0812">Transmembrane</keyword>
<keyword id="KW-1133">Transmembrane helix</keyword>
<reference key="1">
    <citation type="journal article" date="1998" name="Science">
        <title>Genome sequence of the nematode C. elegans: a platform for investigating biology.</title>
        <authorList>
            <consortium name="The C. elegans sequencing consortium"/>
        </authorList>
    </citation>
    <scope>NUCLEOTIDE SEQUENCE [LARGE SCALE GENOMIC DNA]</scope>
    <scope>ALTERNATIVE SPLICING</scope>
    <source>
        <strain>Bristol N2</strain>
    </source>
</reference>
<reference key="2">
    <citation type="journal article" date="2003" name="Nat. Biotechnol.">
        <title>Lectin affinity capture, isotope-coded tagging and mass spectrometry to identify N-linked glycoproteins.</title>
        <authorList>
            <person name="Kaji H."/>
            <person name="Saito H."/>
            <person name="Yamauchi Y."/>
            <person name="Shinkawa T."/>
            <person name="Taoka M."/>
            <person name="Hirabayashi J."/>
            <person name="Kasai K."/>
            <person name="Takahashi N."/>
            <person name="Isobe T."/>
        </authorList>
    </citation>
    <scope>GLYCOSYLATION [LARGE SCALE ANALYSIS] AT ASN-402</scope>
    <scope>IDENTIFICATION BY MASS SPECTROMETRY</scope>
    <source>
        <strain>Bristol N2</strain>
    </source>
</reference>
<reference key="3">
    <citation type="journal article" date="2005" name="Glycobiology">
        <title>Identification of the hydrophobic glycoproteins of Caenorhabditis elegans.</title>
        <authorList>
            <person name="Fan X."/>
            <person name="She Y.-M."/>
            <person name="Bagshaw R.D."/>
            <person name="Callahan J.W."/>
            <person name="Schachter H."/>
            <person name="Mahuran D.J."/>
        </authorList>
    </citation>
    <scope>GLYCOSYLATION [LARGE SCALE ANALYSIS] AT ASN-176; ASN-402 AND ASN-710</scope>
    <scope>IDENTIFICATION BY MASS SPECTROMETRY</scope>
</reference>
<reference key="4">
    <citation type="journal article" date="2007" name="Mol. Cell. Proteomics">
        <title>Proteomics reveals N-linked glycoprotein diversity in Caenorhabditis elegans and suggests an atypical translocation mechanism for integral membrane proteins.</title>
        <authorList>
            <person name="Kaji H."/>
            <person name="Kamiie J."/>
            <person name="Kawakami H."/>
            <person name="Kido K."/>
            <person name="Yamauchi Y."/>
            <person name="Shinkawa T."/>
            <person name="Taoka M."/>
            <person name="Takahashi N."/>
            <person name="Isobe T."/>
        </authorList>
    </citation>
    <scope>GLYCOSYLATION [LARGE SCALE ANALYSIS] AT ASN-115; ASN-123; ASN-176; ASN-402; ASN-710; ASN-723; ASN-789; ASN-894 AND ASN-919</scope>
    <scope>IDENTIFICATION BY MASS SPECTROMETRY</scope>
    <source>
        <strain>Bristol N2</strain>
    </source>
</reference>
<name>YQ02_CAEEL</name>
<proteinExistence type="evidence at protein level"/>
<sequence>MEDVDLGKDRTQLIDFVYANGNGSASNLNNRNNIPLSEKAAKEPLQTQPQEAPPAPKPKVQKQKPPVKPKKRIACSPGSAICLFLLAVAAIIFAAFLGHYLTKQNYEMMQFKSANESMTTCKNFTRSHKKHQDIVNEEDADENASIKQPTKEELALPKNVQPVWYDVSLSPKVGGNGTMGLAHVKLNIEEPTNKIVLNAKDIEFTRNLEKIQLSKEVTKRAKKSVDSGTNSTSEMPEGSGEEAMATTATTTTTESTTPVSSFVDTGIKVTNIEFDENLEKVTLTLDQELKKGSTVVLKIPFTSKVSNNNGLKEYKYKNSEGKEQSMFTTQPSYSYLRHVFPSFDQEAFKAPAAITLMHSKGSIVVANTGVKTKDDGDAQTSTLNKVLDPDFVIGDLVASEVNTTSGITIRIWTRPEVKHSTEQSLDYANQAIDAMEHILQSRLESKSLDIVAVPGFQTGNRVSPSFIVLPEEDILYNEQSNDINQKTRIARMISNRIAAQWFGGITNPEEFGTFWLNEALPRFLEVEALEKILDINSDDLWTYEMEKILERDATATSQPLRVKNVFSSADIAEIDHEFIGKKGAAVLRMIQKSVGVNVFNKAIRSFVSSYRSAYPYDDGLWKSFEKALGGKLKGWNNEPLDVAKFVNTWVDQIGFPLVSVEKLDDETVELSQERFKNDHKTKEQFKFRNAKYWFNWEVPLFLKSSGPVGNVSWLHEAFRLPLNTSDSIYLNTDSNGVYRVNYEEKRWNDIAKQLEKSHGKLSERTRARLISDVFALANSGALPFETALNVTSYLPMETATVPWLIATRIFKKLTERLEGAPIQDKLNSFIYQKIHKKFEEISSSPGEASSNYLKNRLYANLLDLMAIVKPEKSNEKLNELFVEGFLAPCQFSGNFSSDCSEVPGDLREKVYCNGVEFGNDTVFETVRELAEKEVDGAEKDLLQNSLACFRDPRALRRLILDNLNSTSTVTLLLRKMNSRPVGKEIATNWIIDNWSTVLKKKFKNDPETLNAIADAGIILDNEREKSMIETFMEHHHKSTHGIESLDKKIEEATTDIYWRKQKINELNDYLDGKMKGPAKDDEMESSEEQE</sequence>
<feature type="chain" id="PRO_0000248522" description="Aminopeptidase-like protein AC3.5">
    <location>
        <begin position="1"/>
        <end position="1090"/>
    </location>
</feature>
<feature type="topological domain" description="Cytoplasmic" evidence="1">
    <location>
        <begin position="1"/>
        <end position="77"/>
    </location>
</feature>
<feature type="transmembrane region" description="Helical; Signal-anchor for type II membrane protein" evidence="1">
    <location>
        <begin position="78"/>
        <end position="98"/>
    </location>
</feature>
<feature type="topological domain" description="Lumenal" evidence="1">
    <location>
        <begin position="99"/>
        <end position="1090"/>
    </location>
</feature>
<feature type="region of interest" description="Disordered" evidence="2">
    <location>
        <begin position="21"/>
        <end position="71"/>
    </location>
</feature>
<feature type="region of interest" description="Disordered" evidence="2">
    <location>
        <begin position="217"/>
        <end position="259"/>
    </location>
</feature>
<feature type="region of interest" description="Disordered" evidence="2">
    <location>
        <begin position="1069"/>
        <end position="1090"/>
    </location>
</feature>
<feature type="compositionally biased region" description="Low complexity" evidence="2">
    <location>
        <begin position="21"/>
        <end position="33"/>
    </location>
</feature>
<feature type="compositionally biased region" description="Basic residues" evidence="2">
    <location>
        <begin position="59"/>
        <end position="71"/>
    </location>
</feature>
<feature type="compositionally biased region" description="Low complexity" evidence="2">
    <location>
        <begin position="241"/>
        <end position="257"/>
    </location>
</feature>
<feature type="compositionally biased region" description="Basic and acidic residues" evidence="2">
    <location>
        <begin position="1069"/>
        <end position="1080"/>
    </location>
</feature>
<feature type="compositionally biased region" description="Acidic residues" evidence="2">
    <location>
        <begin position="1081"/>
        <end position="1090"/>
    </location>
</feature>
<feature type="glycosylation site" description="N-linked (GlcNAc...) asparagine" evidence="5">
    <location>
        <position position="115"/>
    </location>
</feature>
<feature type="glycosylation site" description="N-linked (GlcNAc...) asparagine" evidence="5">
    <location>
        <position position="123"/>
    </location>
</feature>
<feature type="glycosylation site" description="N-linked (GlcNAc...) asparagine" evidence="1">
    <location>
        <position position="143"/>
    </location>
</feature>
<feature type="glycosylation site" description="N-linked (GlcNAc...) asparagine" evidence="4 5">
    <location>
        <position position="176"/>
    </location>
</feature>
<feature type="glycosylation site" description="N-linked (GlcNAc...) asparagine" evidence="1">
    <location>
        <position position="230"/>
    </location>
</feature>
<feature type="glycosylation site" description="N-linked (GlcNAc...) asparagine" evidence="3 4 5">
    <location>
        <position position="402"/>
    </location>
</feature>
<feature type="glycosylation site" description="N-linked (GlcNAc...) asparagine" evidence="4 5">
    <location>
        <position position="710"/>
    </location>
</feature>
<feature type="glycosylation site" description="N-linked (GlcNAc...) asparagine" evidence="5">
    <location>
        <position position="723"/>
    </location>
</feature>
<feature type="glycosylation site" description="N-linked (GlcNAc...) asparagine" evidence="5">
    <location>
        <position position="789"/>
    </location>
</feature>
<feature type="glycosylation site" description="N-linked (GlcNAc...) asparagine" evidence="5">
    <location>
        <position position="894"/>
    </location>
</feature>
<feature type="glycosylation site" description="N-linked (GlcNAc...) asparagine" evidence="5">
    <location>
        <position position="919"/>
    </location>
</feature>
<feature type="glycosylation site" description="N-linked (GlcNAc...) asparagine" evidence="1">
    <location>
        <position position="964"/>
    </location>
</feature>
<feature type="glycosylation site" description="N-linked (GlcNAc...) asparagine" evidence="1">
    <location>
        <position position="993"/>
    </location>
</feature>
<gene>
    <name type="ORF">AC3.5</name>
</gene>
<evidence type="ECO:0000255" key="1"/>
<evidence type="ECO:0000256" key="2">
    <source>
        <dbReference type="SAM" id="MobiDB-lite"/>
    </source>
</evidence>
<evidence type="ECO:0000269" key="3">
    <source>
    </source>
</evidence>
<evidence type="ECO:0000269" key="4">
    <source>
    </source>
</evidence>
<evidence type="ECO:0000269" key="5">
    <source>
    </source>
</evidence>
<evidence type="ECO:0000305" key="6"/>
<dbReference type="EMBL" id="Z71177">
    <property type="protein sequence ID" value="CAA94872.2"/>
    <property type="molecule type" value="Genomic_DNA"/>
</dbReference>
<dbReference type="PIR" id="T18597">
    <property type="entry name" value="T18597"/>
</dbReference>
<dbReference type="RefSeq" id="NP_001256214.1">
    <property type="nucleotide sequence ID" value="NM_001269285.2"/>
</dbReference>
<dbReference type="SMR" id="Q17405"/>
<dbReference type="FunCoup" id="Q17405">
    <property type="interactions" value="30"/>
</dbReference>
<dbReference type="IntAct" id="Q17405">
    <property type="interactions" value="1"/>
</dbReference>
<dbReference type="STRING" id="6239.AC3.5a.2"/>
<dbReference type="iPTMnet" id="Q17405"/>
<dbReference type="PaxDb" id="6239-AC3.5a.2"/>
<dbReference type="EnsemblMetazoa" id="AC3.5a.1">
    <property type="protein sequence ID" value="AC3.5a.1"/>
    <property type="gene ID" value="WBGene00007071"/>
</dbReference>
<dbReference type="GeneID" id="179447"/>
<dbReference type="KEGG" id="cel:CELE_AC3.5"/>
<dbReference type="UCSC" id="AC3.5.1">
    <property type="organism name" value="c. elegans"/>
</dbReference>
<dbReference type="AGR" id="WB:WBGene00007071"/>
<dbReference type="CTD" id="179447"/>
<dbReference type="WormBase" id="AC3.5a">
    <property type="protein sequence ID" value="CE36372"/>
    <property type="gene ID" value="WBGene00007071"/>
</dbReference>
<dbReference type="eggNOG" id="KOG1046">
    <property type="taxonomic scope" value="Eukaryota"/>
</dbReference>
<dbReference type="InParanoid" id="Q17405"/>
<dbReference type="OMA" id="WLHEAFR"/>
<dbReference type="OrthoDB" id="10031169at2759"/>
<dbReference type="PhylomeDB" id="Q17405"/>
<dbReference type="Reactome" id="R-CEL-2022377">
    <property type="pathway name" value="Metabolism of Angiotensinogen to Angiotensins"/>
</dbReference>
<dbReference type="Reactome" id="R-CEL-983168">
    <property type="pathway name" value="Antigen processing: Ubiquitination &amp; Proteasome degradation"/>
</dbReference>
<dbReference type="Reactome" id="R-CEL-983170">
    <property type="pathway name" value="Antigen Presentation: Folding, assembly and peptide loading of class I MHC"/>
</dbReference>
<dbReference type="PRO" id="PR:Q17405"/>
<dbReference type="Proteomes" id="UP000001940">
    <property type="component" value="Chromosome V"/>
</dbReference>
<dbReference type="Bgee" id="WBGene00007071">
    <property type="expression patterns" value="Expressed in larva and 2 other cell types or tissues"/>
</dbReference>
<dbReference type="ExpressionAtlas" id="Q17405">
    <property type="expression patterns" value="baseline and differential"/>
</dbReference>
<dbReference type="GO" id="GO:0005737">
    <property type="term" value="C:cytoplasm"/>
    <property type="evidence" value="ECO:0000318"/>
    <property type="project" value="GO_Central"/>
</dbReference>
<dbReference type="GO" id="GO:0005615">
    <property type="term" value="C:extracellular space"/>
    <property type="evidence" value="ECO:0000318"/>
    <property type="project" value="GO_Central"/>
</dbReference>
<dbReference type="GO" id="GO:0016020">
    <property type="term" value="C:membrane"/>
    <property type="evidence" value="ECO:0000318"/>
    <property type="project" value="GO_Central"/>
</dbReference>
<dbReference type="GO" id="GO:0070006">
    <property type="term" value="F:metalloaminopeptidase activity"/>
    <property type="evidence" value="ECO:0000318"/>
    <property type="project" value="GO_Central"/>
</dbReference>
<dbReference type="GO" id="GO:0042277">
    <property type="term" value="F:peptide binding"/>
    <property type="evidence" value="ECO:0000318"/>
    <property type="project" value="GO_Central"/>
</dbReference>
<dbReference type="GO" id="GO:0008270">
    <property type="term" value="F:zinc ion binding"/>
    <property type="evidence" value="ECO:0000318"/>
    <property type="project" value="GO_Central"/>
</dbReference>
<dbReference type="GO" id="GO:0043171">
    <property type="term" value="P:peptide catabolic process"/>
    <property type="evidence" value="ECO:0000318"/>
    <property type="project" value="GO_Central"/>
</dbReference>
<dbReference type="GO" id="GO:0006508">
    <property type="term" value="P:proteolysis"/>
    <property type="evidence" value="ECO:0000318"/>
    <property type="project" value="GO_Central"/>
</dbReference>
<dbReference type="Gene3D" id="1.25.50.20">
    <property type="match status" value="1"/>
</dbReference>
<dbReference type="Gene3D" id="2.60.40.1910">
    <property type="match status" value="1"/>
</dbReference>
<dbReference type="Gene3D" id="1.10.390.10">
    <property type="entry name" value="Neutral Protease Domain 2"/>
    <property type="match status" value="1"/>
</dbReference>
<dbReference type="Gene3D" id="2.60.40.1730">
    <property type="entry name" value="tricorn interacting facor f3 domain"/>
    <property type="match status" value="1"/>
</dbReference>
<dbReference type="InterPro" id="IPR045357">
    <property type="entry name" value="Aminopeptidase_N-like_N"/>
</dbReference>
<dbReference type="InterPro" id="IPR042097">
    <property type="entry name" value="Aminopeptidase_N-like_N_sf"/>
</dbReference>
<dbReference type="InterPro" id="IPR024571">
    <property type="entry name" value="ERAP1-like_C_dom"/>
</dbReference>
<dbReference type="InterPro" id="IPR050344">
    <property type="entry name" value="Peptidase_M1_aminopeptidases"/>
</dbReference>
<dbReference type="InterPro" id="IPR014782">
    <property type="entry name" value="Peptidase_M1_dom"/>
</dbReference>
<dbReference type="InterPro" id="IPR027268">
    <property type="entry name" value="Peptidase_M4/M1_CTD_sf"/>
</dbReference>
<dbReference type="PANTHER" id="PTHR11533:SF201">
    <property type="entry name" value="AMINOPEPTIDASE-LIKE PROTEIN AC3.5"/>
    <property type="match status" value="1"/>
</dbReference>
<dbReference type="PANTHER" id="PTHR11533">
    <property type="entry name" value="PROTEASE M1 ZINC METALLOPROTEASE"/>
    <property type="match status" value="1"/>
</dbReference>
<dbReference type="Pfam" id="PF11838">
    <property type="entry name" value="ERAP1_C"/>
    <property type="match status" value="1"/>
</dbReference>
<dbReference type="Pfam" id="PF01433">
    <property type="entry name" value="Peptidase_M1"/>
    <property type="match status" value="1"/>
</dbReference>
<dbReference type="Pfam" id="PF17900">
    <property type="entry name" value="Peptidase_M1_N"/>
    <property type="match status" value="1"/>
</dbReference>
<dbReference type="SUPFAM" id="SSF63737">
    <property type="entry name" value="Leukotriene A4 hydrolase N-terminal domain"/>
    <property type="match status" value="1"/>
</dbReference>
<dbReference type="SUPFAM" id="SSF55486">
    <property type="entry name" value="Metalloproteases ('zincins'), catalytic domain"/>
    <property type="match status" value="1"/>
</dbReference>
<organism>
    <name type="scientific">Caenorhabditis elegans</name>
    <dbReference type="NCBI Taxonomy" id="6239"/>
    <lineage>
        <taxon>Eukaryota</taxon>
        <taxon>Metazoa</taxon>
        <taxon>Ecdysozoa</taxon>
        <taxon>Nematoda</taxon>
        <taxon>Chromadorea</taxon>
        <taxon>Rhabditida</taxon>
        <taxon>Rhabditina</taxon>
        <taxon>Rhabditomorpha</taxon>
        <taxon>Rhabditoidea</taxon>
        <taxon>Rhabditidae</taxon>
        <taxon>Peloderinae</taxon>
        <taxon>Caenorhabditis</taxon>
    </lineage>
</organism>
<protein>
    <recommendedName>
        <fullName>Aminopeptidase-like protein AC3.5</fullName>
    </recommendedName>
</protein>